<feature type="chain" id="PRO_0000402592" description="Pyrimidine monooxygenase RutA">
    <location>
        <begin position="1"/>
        <end position="363"/>
    </location>
</feature>
<feature type="binding site" evidence="1">
    <location>
        <begin position="49"/>
        <end position="50"/>
    </location>
    <ligand>
        <name>FMN</name>
        <dbReference type="ChEBI" id="CHEBI:58210"/>
    </ligand>
</feature>
<feature type="binding site" evidence="1">
    <location>
        <position position="115"/>
    </location>
    <ligand>
        <name>FMN</name>
        <dbReference type="ChEBI" id="CHEBI:58210"/>
    </ligand>
</feature>
<feature type="binding site" evidence="1">
    <location>
        <position position="124"/>
    </location>
    <ligand>
        <name>FMN</name>
        <dbReference type="ChEBI" id="CHEBI:58210"/>
    </ligand>
</feature>
<feature type="binding site" evidence="1">
    <location>
        <begin position="140"/>
        <end position="141"/>
    </location>
    <ligand>
        <name>FMN</name>
        <dbReference type="ChEBI" id="CHEBI:58210"/>
    </ligand>
</feature>
<feature type="binding site" evidence="1">
    <location>
        <position position="190"/>
    </location>
    <ligand>
        <name>FMN</name>
        <dbReference type="ChEBI" id="CHEBI:58210"/>
    </ligand>
</feature>
<proteinExistence type="inferred from homology"/>
<sequence>MKIGVFVPIGNNGWLISTTAPQYMPTFELNKAIVQKAEHYHFDFALSMIKLRGFGGKTEFWDHNLESFTLMAGLAAVTSRIQIYATAATLTLPPAIVARMASTIDSISGGRFGVNLVTGWQKPEYDQMGIWPGDEYFSRRYDYLTEYVQVLRDLWGTGKSDFKGDYFTMNDCRVSPQPSTPMKVICAGQSDAGMAFSAQHADFNFCFGKGVNTPAAFAPTAARMKDAAEKTGRDVGSYVLFMVIADETDEAARAKWEHYKAGADEDALSWLTEQSQKDTRSGADTNVRQMADPTSAVNINMGTLVGSYASVAKMLDEVASVPGAEGVLLTFDDFLQGVETFGERIQPLMECRSHIPAVTREVA</sequence>
<gene>
    <name evidence="1" type="primary">rutA</name>
    <name type="ordered locus">Ent638_1525</name>
</gene>
<reference key="1">
    <citation type="journal article" date="2010" name="PLoS Genet.">
        <title>Genome sequence of the plant growth promoting endophytic bacterium Enterobacter sp. 638.</title>
        <authorList>
            <person name="Taghavi S."/>
            <person name="van der Lelie D."/>
            <person name="Hoffman A."/>
            <person name="Zhang Y.B."/>
            <person name="Walla M.D."/>
            <person name="Vangronsveld J."/>
            <person name="Newman L."/>
            <person name="Monchy S."/>
        </authorList>
    </citation>
    <scope>NUCLEOTIDE SEQUENCE [LARGE SCALE GENOMIC DNA]</scope>
    <source>
        <strain>638</strain>
    </source>
</reference>
<keyword id="KW-0285">Flavoprotein</keyword>
<keyword id="KW-0288">FMN</keyword>
<keyword id="KW-0503">Monooxygenase</keyword>
<keyword id="KW-0521">NADP</keyword>
<keyword id="KW-0560">Oxidoreductase</keyword>
<name>RUTA_ENT38</name>
<evidence type="ECO:0000255" key="1">
    <source>
        <dbReference type="HAMAP-Rule" id="MF_01699"/>
    </source>
</evidence>
<comment type="function">
    <text evidence="1">Catalyzes the pyrimidine ring opening between N-3 and C-4 by an unusual flavin hydroperoxide-catalyzed mechanism, adding oxygen atoms in the process to yield ureidoacrylate peracid, that immediately reacts with FMN forming ureidoacrylate and FMN-N(5)-oxide. The FMN-N(5)-oxide reacts spontaneously with NADH to produce FMN. Requires the flavin reductase RutF to regenerate FMN in vivo.</text>
</comment>
<comment type="catalytic activity">
    <reaction evidence="1">
        <text>uracil + FMNH2 + NADH + O2 = (Z)-3-ureidoacrylate + FMN + NAD(+) + H2O + H(+)</text>
        <dbReference type="Rhea" id="RHEA:31587"/>
        <dbReference type="ChEBI" id="CHEBI:15377"/>
        <dbReference type="ChEBI" id="CHEBI:15378"/>
        <dbReference type="ChEBI" id="CHEBI:15379"/>
        <dbReference type="ChEBI" id="CHEBI:17568"/>
        <dbReference type="ChEBI" id="CHEBI:57540"/>
        <dbReference type="ChEBI" id="CHEBI:57618"/>
        <dbReference type="ChEBI" id="CHEBI:57945"/>
        <dbReference type="ChEBI" id="CHEBI:58210"/>
        <dbReference type="ChEBI" id="CHEBI:59891"/>
        <dbReference type="EC" id="1.14.99.46"/>
    </reaction>
</comment>
<comment type="catalytic activity">
    <reaction evidence="1">
        <text>thymine + FMNH2 + NADH + O2 = (Z)-2-methylureidoacrylate + FMN + NAD(+) + H2O + H(+)</text>
        <dbReference type="Rhea" id="RHEA:31599"/>
        <dbReference type="ChEBI" id="CHEBI:15377"/>
        <dbReference type="ChEBI" id="CHEBI:15378"/>
        <dbReference type="ChEBI" id="CHEBI:15379"/>
        <dbReference type="ChEBI" id="CHEBI:17821"/>
        <dbReference type="ChEBI" id="CHEBI:57540"/>
        <dbReference type="ChEBI" id="CHEBI:57618"/>
        <dbReference type="ChEBI" id="CHEBI:57945"/>
        <dbReference type="ChEBI" id="CHEBI:58210"/>
        <dbReference type="ChEBI" id="CHEBI:143783"/>
        <dbReference type="EC" id="1.14.99.46"/>
    </reaction>
</comment>
<comment type="similarity">
    <text evidence="1">Belongs to the NtaA/SnaA/DszA monooxygenase family. RutA subfamily.</text>
</comment>
<protein>
    <recommendedName>
        <fullName evidence="1">Pyrimidine monooxygenase RutA</fullName>
        <ecNumber evidence="1">1.14.99.46</ecNumber>
    </recommendedName>
</protein>
<accession>A4W925</accession>
<organism>
    <name type="scientific">Enterobacter sp. (strain 638)</name>
    <dbReference type="NCBI Taxonomy" id="399742"/>
    <lineage>
        <taxon>Bacteria</taxon>
        <taxon>Pseudomonadati</taxon>
        <taxon>Pseudomonadota</taxon>
        <taxon>Gammaproteobacteria</taxon>
        <taxon>Enterobacterales</taxon>
        <taxon>Enterobacteriaceae</taxon>
        <taxon>Enterobacter</taxon>
    </lineage>
</organism>
<dbReference type="EC" id="1.14.99.46" evidence="1"/>
<dbReference type="EMBL" id="CP000653">
    <property type="protein sequence ID" value="ABP60205.1"/>
    <property type="molecule type" value="Genomic_DNA"/>
</dbReference>
<dbReference type="RefSeq" id="WP_012016922.1">
    <property type="nucleotide sequence ID" value="NC_009436.1"/>
</dbReference>
<dbReference type="SMR" id="A4W925"/>
<dbReference type="STRING" id="399742.Ent638_1525"/>
<dbReference type="KEGG" id="ent:Ent638_1525"/>
<dbReference type="eggNOG" id="COG2141">
    <property type="taxonomic scope" value="Bacteria"/>
</dbReference>
<dbReference type="HOGENOM" id="CLU_027853_1_1_6"/>
<dbReference type="OrthoDB" id="9814695at2"/>
<dbReference type="Proteomes" id="UP000000230">
    <property type="component" value="Chromosome"/>
</dbReference>
<dbReference type="GO" id="GO:0008726">
    <property type="term" value="F:alkanesulfonate monooxygenase activity"/>
    <property type="evidence" value="ECO:0007669"/>
    <property type="project" value="TreeGrafter"/>
</dbReference>
<dbReference type="GO" id="GO:0052614">
    <property type="term" value="F:uracil oxygenase activity"/>
    <property type="evidence" value="ECO:0007669"/>
    <property type="project" value="UniProtKB-EC"/>
</dbReference>
<dbReference type="GO" id="GO:0046306">
    <property type="term" value="P:alkanesulfonate catabolic process"/>
    <property type="evidence" value="ECO:0007669"/>
    <property type="project" value="TreeGrafter"/>
</dbReference>
<dbReference type="GO" id="GO:0019740">
    <property type="term" value="P:nitrogen utilization"/>
    <property type="evidence" value="ECO:0007669"/>
    <property type="project" value="UniProtKB-UniRule"/>
</dbReference>
<dbReference type="GO" id="GO:0006212">
    <property type="term" value="P:uracil catabolic process"/>
    <property type="evidence" value="ECO:0007669"/>
    <property type="project" value="UniProtKB-UniRule"/>
</dbReference>
<dbReference type="CDD" id="cd01094">
    <property type="entry name" value="Alkanesulfonate_monoxygenase"/>
    <property type="match status" value="1"/>
</dbReference>
<dbReference type="FunFam" id="3.20.20.30:FF:000003">
    <property type="entry name" value="Pyrimidine monooxygenase RutA"/>
    <property type="match status" value="1"/>
</dbReference>
<dbReference type="Gene3D" id="3.20.20.30">
    <property type="entry name" value="Luciferase-like domain"/>
    <property type="match status" value="1"/>
</dbReference>
<dbReference type="HAMAP" id="MF_01699">
    <property type="entry name" value="RutA"/>
    <property type="match status" value="1"/>
</dbReference>
<dbReference type="InterPro" id="IPR011251">
    <property type="entry name" value="Luciferase-like_dom"/>
</dbReference>
<dbReference type="InterPro" id="IPR036661">
    <property type="entry name" value="Luciferase-like_sf"/>
</dbReference>
<dbReference type="InterPro" id="IPR019914">
    <property type="entry name" value="Pyrimidine_monooxygenase_RutA"/>
</dbReference>
<dbReference type="InterPro" id="IPR050172">
    <property type="entry name" value="SsuD_RutA_monooxygenase"/>
</dbReference>
<dbReference type="NCBIfam" id="TIGR03612">
    <property type="entry name" value="RutA"/>
    <property type="match status" value="1"/>
</dbReference>
<dbReference type="PANTHER" id="PTHR42847">
    <property type="entry name" value="ALKANESULFONATE MONOOXYGENASE"/>
    <property type="match status" value="1"/>
</dbReference>
<dbReference type="PANTHER" id="PTHR42847:SF4">
    <property type="entry name" value="ALKANESULFONATE MONOOXYGENASE-RELATED"/>
    <property type="match status" value="1"/>
</dbReference>
<dbReference type="Pfam" id="PF00296">
    <property type="entry name" value="Bac_luciferase"/>
    <property type="match status" value="1"/>
</dbReference>
<dbReference type="SUPFAM" id="SSF51679">
    <property type="entry name" value="Bacterial luciferase-like"/>
    <property type="match status" value="1"/>
</dbReference>